<reference key="1">
    <citation type="journal article" date="1998" name="Biol. Chem.">
        <title>Sequence similarities between the genes encoding the S.NgoI and HaeII restriction/modification systems.</title>
        <authorList>
            <person name="Stein D.C."/>
            <person name="Gunn J.S."/>
            <person name="Piekarowicz A."/>
        </authorList>
    </citation>
    <scope>NUCLEOTIDE SEQUENCE [GENOMIC DNA]</scope>
    <source>
        <strain>WR302</strain>
    </source>
</reference>
<reference key="2">
    <citation type="journal article" date="2003" name="Nucleic Acids Res.">
        <title>A nomenclature for restriction enzymes, DNA methyltransferases, homing endonucleases and their genes.</title>
        <authorList>
            <person name="Roberts R.J."/>
            <person name="Belfort M."/>
            <person name="Bestor T."/>
            <person name="Bhagwat A.S."/>
            <person name="Bickle T.A."/>
            <person name="Bitinaite J."/>
            <person name="Blumenthal R.M."/>
            <person name="Degtyarev S.K."/>
            <person name="Dryden D.T."/>
            <person name="Dybvig K."/>
            <person name="Firman K."/>
            <person name="Gromova E.S."/>
            <person name="Gumport R.I."/>
            <person name="Halford S.E."/>
            <person name="Hattman S."/>
            <person name="Heitman J."/>
            <person name="Hornby D.P."/>
            <person name="Janulaitis A."/>
            <person name="Jeltsch A."/>
            <person name="Josephsen J."/>
            <person name="Kiss A."/>
            <person name="Klaenhammer T.R."/>
            <person name="Kobayashi I."/>
            <person name="Kong H."/>
            <person name="Krueger D.H."/>
            <person name="Lacks S."/>
            <person name="Marinus M.G."/>
            <person name="Miyahara M."/>
            <person name="Morgan R.D."/>
            <person name="Murray N.E."/>
            <person name="Nagaraja V."/>
            <person name="Piekarowicz A."/>
            <person name="Pingoud A."/>
            <person name="Raleigh E."/>
            <person name="Rao D.N."/>
            <person name="Reich N."/>
            <person name="Repin V.E."/>
            <person name="Selker E.U."/>
            <person name="Shaw P.C."/>
            <person name="Stein D.C."/>
            <person name="Stoddard B.L."/>
            <person name="Szybalski W."/>
            <person name="Trautner T.A."/>
            <person name="Van Etten J.L."/>
            <person name="Vitor J.M."/>
            <person name="Wilson G.G."/>
            <person name="Xu S.Y."/>
        </authorList>
    </citation>
    <scope>NOMENCLATURE</scope>
    <scope>SUBTYPE</scope>
</reference>
<sequence>MTLEEQQAKEALDGIIKKSRVHLYKPIQIAEILYHDRCIKQLDFLNLDTYRNQSKRWRDEICRRFLGRISTSSAKFQDNLFEKNAIPPEKLAVLGTLNRQSDGGVESYIYKQFFNRFSQMSERLAYVGNTDRYSFQLSEFLNLFWLEPGLKRSIDKIYEIVVYALFDALVSELGITVSIDFPKENLFLWEEYQDFAEKIITMPKNEHLKLPAKIHRVGVTNAADRGLDMWSNFGLAIQVKHLSLDEELAEDIVSSISADRIVIVCKKAEQSVIVSLLTQIGWKSRIQNIVTEDDLISWYEKALRGQYPIAEALLENIKTEIMREFPAVNEANEFLDFAQNRGYDITVTHF</sequence>
<name>T2B1_NEIGO</name>
<evidence type="ECO:0000303" key="1">
    <source>
    </source>
</evidence>
<evidence type="ECO:0000303" key="2">
    <source>
    </source>
</evidence>
<dbReference type="EC" id="3.1.21.4"/>
<dbReference type="EMBL" id="U42459">
    <property type="protein sequence ID" value="AAB03207.2"/>
    <property type="molecule type" value="Genomic_DNA"/>
</dbReference>
<dbReference type="REBASE" id="3133">
    <property type="entry name" value="NgoBI"/>
</dbReference>
<dbReference type="PRO" id="PR:Q50973"/>
<dbReference type="GO" id="GO:0009036">
    <property type="term" value="F:type II site-specific deoxyribonuclease activity"/>
    <property type="evidence" value="ECO:0007669"/>
    <property type="project" value="UniProtKB-EC"/>
</dbReference>
<dbReference type="GO" id="GO:0009307">
    <property type="term" value="P:DNA restriction-modification system"/>
    <property type="evidence" value="ECO:0007669"/>
    <property type="project" value="UniProtKB-KW"/>
</dbReference>
<dbReference type="InterPro" id="IPR019058">
    <property type="entry name" value="Restrct_endonuc_II_HaeII"/>
</dbReference>
<dbReference type="Pfam" id="PF09554">
    <property type="entry name" value="RE_HaeII"/>
    <property type="match status" value="1"/>
</dbReference>
<feature type="chain" id="PRO_0000077344" description="Type II restriction enzyme NgoBI">
    <location>
        <begin position="1"/>
        <end position="350"/>
    </location>
</feature>
<proteinExistence type="predicted"/>
<organism>
    <name type="scientific">Neisseria gonorrhoeae</name>
    <dbReference type="NCBI Taxonomy" id="485"/>
    <lineage>
        <taxon>Bacteria</taxon>
        <taxon>Pseudomonadati</taxon>
        <taxon>Pseudomonadota</taxon>
        <taxon>Betaproteobacteria</taxon>
        <taxon>Neisseriales</taxon>
        <taxon>Neisseriaceae</taxon>
        <taxon>Neisseria</taxon>
    </lineage>
</organism>
<comment type="function">
    <text evidence="1">A P subtype restriction enzyme that recognizes the double-stranded sequence 5'-RGCGCY-3'; the cleavage site is unknown.</text>
</comment>
<comment type="catalytic activity">
    <reaction>
        <text>Endonucleolytic cleavage of DNA to give specific double-stranded fragments with terminal 5'-phosphates.</text>
        <dbReference type="EC" id="3.1.21.4"/>
    </reaction>
</comment>
<accession>Q50973</accession>
<protein>
    <recommendedName>
        <fullName evidence="1">Type II restriction enzyme NgoBI</fullName>
        <shortName>R.NgoBI</shortName>
        <ecNumber>3.1.21.4</ecNumber>
    </recommendedName>
    <alternativeName>
        <fullName>Endonuclease NgoBI</fullName>
    </alternativeName>
    <alternativeName>
        <fullName evidence="2">R.NgoI</fullName>
    </alternativeName>
    <alternativeName>
        <fullName evidence="2">S.NgoI</fullName>
    </alternativeName>
    <alternativeName>
        <fullName>Type-2 restriction enzyme NgoBI</fullName>
    </alternativeName>
</protein>
<gene>
    <name type="primary">ngoBIR</name>
</gene>
<keyword id="KW-0255">Endonuclease</keyword>
<keyword id="KW-0378">Hydrolase</keyword>
<keyword id="KW-0540">Nuclease</keyword>
<keyword id="KW-0680">Restriction system</keyword>